<comment type="similarity">
    <text evidence="1">Belongs to the mycobacterial PPE family.</text>
</comment>
<dbReference type="EMBL" id="AL123456">
    <property type="protein sequence ID" value="CCP45935.1"/>
    <property type="molecule type" value="Genomic_DNA"/>
</dbReference>
<dbReference type="PIR" id="D70922">
    <property type="entry name" value="D70922"/>
</dbReference>
<dbReference type="RefSeq" id="WP_003899929.1">
    <property type="nucleotide sequence ID" value="NZ_NVQJ01000019.1"/>
</dbReference>
<dbReference type="RefSeq" id="YP_177932.1">
    <property type="nucleotide sequence ID" value="NC_000962.3"/>
</dbReference>
<dbReference type="SMR" id="P9WHY5"/>
<dbReference type="STRING" id="83332.Rv3125c"/>
<dbReference type="PaxDb" id="83332-Rv3125c"/>
<dbReference type="DNASU" id="888892"/>
<dbReference type="GeneID" id="888892"/>
<dbReference type="KEGG" id="mtu:Rv3125c"/>
<dbReference type="KEGG" id="mtv:RVBD_3125c"/>
<dbReference type="TubercuList" id="Rv3125c"/>
<dbReference type="eggNOG" id="COG5651">
    <property type="taxonomic scope" value="Bacteria"/>
</dbReference>
<dbReference type="InParanoid" id="P9WHY5"/>
<dbReference type="OrthoDB" id="4753779at2"/>
<dbReference type="PhylomeDB" id="P9WHY5"/>
<dbReference type="Proteomes" id="UP000001584">
    <property type="component" value="Chromosome"/>
</dbReference>
<dbReference type="GO" id="GO:0052572">
    <property type="term" value="P:response to host immune response"/>
    <property type="evidence" value="ECO:0000318"/>
    <property type="project" value="GO_Central"/>
</dbReference>
<dbReference type="FunFam" id="1.20.1260.20:FF:000001">
    <property type="entry name" value="PPE family protein PPE41"/>
    <property type="match status" value="1"/>
</dbReference>
<dbReference type="Gene3D" id="1.20.1260.20">
    <property type="entry name" value="PPE superfamily"/>
    <property type="match status" value="1"/>
</dbReference>
<dbReference type="InterPro" id="IPR022171">
    <property type="entry name" value="PPE_C"/>
</dbReference>
<dbReference type="InterPro" id="IPR000030">
    <property type="entry name" value="PPE_dom"/>
</dbReference>
<dbReference type="InterPro" id="IPR038332">
    <property type="entry name" value="PPE_sf"/>
</dbReference>
<dbReference type="PANTHER" id="PTHR46766">
    <property type="entry name" value="GLUTAMINE-RICH PROTEIN 2"/>
    <property type="match status" value="1"/>
</dbReference>
<dbReference type="PANTHER" id="PTHR46766:SF1">
    <property type="entry name" value="GLUTAMINE-RICH PROTEIN 2"/>
    <property type="match status" value="1"/>
</dbReference>
<dbReference type="Pfam" id="PF00823">
    <property type="entry name" value="PPE"/>
    <property type="match status" value="1"/>
</dbReference>
<dbReference type="Pfam" id="PF12484">
    <property type="entry name" value="PPE-SVP"/>
    <property type="match status" value="1"/>
</dbReference>
<dbReference type="SUPFAM" id="SSF140459">
    <property type="entry name" value="PE/PPE dimer-like"/>
    <property type="match status" value="1"/>
</dbReference>
<gene>
    <name type="primary">PPE49</name>
    <name type="ordered locus">Rv3125c</name>
</gene>
<organism>
    <name type="scientific">Mycobacterium tuberculosis (strain ATCC 25618 / H37Rv)</name>
    <dbReference type="NCBI Taxonomy" id="83332"/>
    <lineage>
        <taxon>Bacteria</taxon>
        <taxon>Bacillati</taxon>
        <taxon>Actinomycetota</taxon>
        <taxon>Actinomycetes</taxon>
        <taxon>Mycobacteriales</taxon>
        <taxon>Mycobacteriaceae</taxon>
        <taxon>Mycobacterium</taxon>
        <taxon>Mycobacterium tuberculosis complex</taxon>
    </lineage>
</organism>
<sequence length="391" mass="38586">MVLGFSWLPPEINSARMFAGAGSGPLFAAASAWEGLAADLWASASSFESVLAALTTGPWTGPASMSMAAAASPYVGWLSTVASQAQLAAIQARAAATAFEAALAATVHPTAVTANRVSLASLIAANVLGQNTPAIAATEFDYLEMWAQDVAAMVGYHAGAKSVAATLAPFSLPPVSLAGLAAQVGTQVAGMATTASAAVTPVVEGAMASVPTVMSGMQSLVSQLPLQHASMLFLPVRILTSPITTLASMARESATRLGPPAGGLAAANTPNPSGAAIPAFKPLGGRELGAGMSAGLGQAQLVGSMSVPPTWQGSIPISMASSAMSGLGVPPNPVALTQAAGAAGGGMPMMLMPMSISGAGAGMPGGLMDRDGAGWHVTQARLTVIPRTGVG</sequence>
<protein>
    <recommendedName>
        <fullName>Uncharacterized PPE family protein PPE49</fullName>
    </recommendedName>
</protein>
<feature type="chain" id="PRO_0000378483" description="Uncharacterized PPE family protein PPE49">
    <location>
        <begin position="1"/>
        <end position="391"/>
    </location>
</feature>
<evidence type="ECO:0000305" key="1"/>
<accession>P9WHY5</accession>
<accession>L0TD84</accession>
<accession>Q6MX09</accession>
<accession>Q7D631</accession>
<name>PPE49_MYCTU</name>
<proteinExistence type="inferred from homology"/>
<keyword id="KW-1185">Reference proteome</keyword>
<reference key="1">
    <citation type="journal article" date="1998" name="Nature">
        <title>Deciphering the biology of Mycobacterium tuberculosis from the complete genome sequence.</title>
        <authorList>
            <person name="Cole S.T."/>
            <person name="Brosch R."/>
            <person name="Parkhill J."/>
            <person name="Garnier T."/>
            <person name="Churcher C.M."/>
            <person name="Harris D.E."/>
            <person name="Gordon S.V."/>
            <person name="Eiglmeier K."/>
            <person name="Gas S."/>
            <person name="Barry C.E. III"/>
            <person name="Tekaia F."/>
            <person name="Badcock K."/>
            <person name="Basham D."/>
            <person name="Brown D."/>
            <person name="Chillingworth T."/>
            <person name="Connor R."/>
            <person name="Davies R.M."/>
            <person name="Devlin K."/>
            <person name="Feltwell T."/>
            <person name="Gentles S."/>
            <person name="Hamlin N."/>
            <person name="Holroyd S."/>
            <person name="Hornsby T."/>
            <person name="Jagels K."/>
            <person name="Krogh A."/>
            <person name="McLean J."/>
            <person name="Moule S."/>
            <person name="Murphy L.D."/>
            <person name="Oliver S."/>
            <person name="Osborne J."/>
            <person name="Quail M.A."/>
            <person name="Rajandream M.A."/>
            <person name="Rogers J."/>
            <person name="Rutter S."/>
            <person name="Seeger K."/>
            <person name="Skelton S."/>
            <person name="Squares S."/>
            <person name="Squares R."/>
            <person name="Sulston J.E."/>
            <person name="Taylor K."/>
            <person name="Whitehead S."/>
            <person name="Barrell B.G."/>
        </authorList>
    </citation>
    <scope>NUCLEOTIDE SEQUENCE [LARGE SCALE GENOMIC DNA]</scope>
    <source>
        <strain>ATCC 25618 / H37Rv</strain>
    </source>
</reference>